<proteinExistence type="inferred from homology"/>
<reference key="1">
    <citation type="journal article" date="1999" name="Ann. Mo. Bot. Gard.">
        <title>Phylogeny of Poaceae inferred from matK sequences.</title>
        <authorList>
            <person name="Hilu K.W."/>
            <person name="Alice L.A."/>
            <person name="Liang H."/>
        </authorList>
    </citation>
    <scope>NUCLEOTIDE SEQUENCE [GENOMIC DNA]</scope>
</reference>
<sequence>MEKFEGYSEKHKSRQQYFVYPLLFQEYIYAFAHDYGLNDSEPVEIVSYNNKKFSSLLVKRLIIRMYQQNFGINSVNHPNQDRLLDYKIGFYSEFYSQILSEGFAIVVEIPFSLRELPCPKQKEIPKFQNLRSIHSIFPFLEDKFLHLDYLSHIEIPYPIHLEILVQLLQYRIQDVPSLHLLRFFLNYYSNWNSFITSMKSFFLFKKENKRLFRFLYNSYVSEYEFFLLFLRKQSSCLPLASSGTFLERIHFSRKMEHFGIMYPGFFRKTLWFFMDPLMHYARYQGKAIFASKGTLFFNKKWKWYLIHLWQYFFSFWTQPRRIHLNQLANSCFDFMGYLSSVPKSPLLVRNQMLENSFLIDTRMQKLDTIVPVTALIGYLSKAQFCTGSGHPISKPIWTDLSDWDILDRFGRICRNLFHYHSGSSKKQTLYRLKYILRLSCARTLARKHKSTVRTFMQRLGSAFLEEFFTEEELVFSLMFTKTTLFSFRGSHSERIWYFDIIRINDLVKPLN</sequence>
<organism>
    <name type="scientific">Phleum pratense</name>
    <name type="common">Common timothy</name>
    <dbReference type="NCBI Taxonomy" id="15957"/>
    <lineage>
        <taxon>Eukaryota</taxon>
        <taxon>Viridiplantae</taxon>
        <taxon>Streptophyta</taxon>
        <taxon>Embryophyta</taxon>
        <taxon>Tracheophyta</taxon>
        <taxon>Spermatophyta</taxon>
        <taxon>Magnoliopsida</taxon>
        <taxon>Liliopsida</taxon>
        <taxon>Poales</taxon>
        <taxon>Poaceae</taxon>
        <taxon>BOP clade</taxon>
        <taxon>Pooideae</taxon>
        <taxon>Poodae</taxon>
        <taxon>Poeae</taxon>
        <taxon>Poeae Chloroplast Group 2 (Poeae type)</taxon>
        <taxon>Poodinae</taxon>
        <taxon>Phleinae</taxon>
        <taxon>Phleum</taxon>
    </lineage>
</organism>
<dbReference type="EMBL" id="AF164397">
    <property type="protein sequence ID" value="AAF66184.1"/>
    <property type="molecule type" value="Genomic_DNA"/>
</dbReference>
<dbReference type="RefSeq" id="YP_010506788.1">
    <property type="nucleotide sequence ID" value="NC_067044.1"/>
</dbReference>
<dbReference type="GeneID" id="75521951"/>
<dbReference type="GO" id="GO:0009507">
    <property type="term" value="C:chloroplast"/>
    <property type="evidence" value="ECO:0007669"/>
    <property type="project" value="UniProtKB-SubCell"/>
</dbReference>
<dbReference type="GO" id="GO:0003723">
    <property type="term" value="F:RNA binding"/>
    <property type="evidence" value="ECO:0007669"/>
    <property type="project" value="UniProtKB-KW"/>
</dbReference>
<dbReference type="GO" id="GO:0006397">
    <property type="term" value="P:mRNA processing"/>
    <property type="evidence" value="ECO:0007669"/>
    <property type="project" value="UniProtKB-KW"/>
</dbReference>
<dbReference type="GO" id="GO:0008380">
    <property type="term" value="P:RNA splicing"/>
    <property type="evidence" value="ECO:0007669"/>
    <property type="project" value="UniProtKB-UniRule"/>
</dbReference>
<dbReference type="GO" id="GO:0008033">
    <property type="term" value="P:tRNA processing"/>
    <property type="evidence" value="ECO:0007669"/>
    <property type="project" value="UniProtKB-KW"/>
</dbReference>
<dbReference type="HAMAP" id="MF_01390">
    <property type="entry name" value="MatK"/>
    <property type="match status" value="1"/>
</dbReference>
<dbReference type="InterPro" id="IPR024937">
    <property type="entry name" value="Domain_X"/>
</dbReference>
<dbReference type="InterPro" id="IPR002866">
    <property type="entry name" value="Maturase_MatK"/>
</dbReference>
<dbReference type="InterPro" id="IPR024942">
    <property type="entry name" value="Maturase_MatK_N"/>
</dbReference>
<dbReference type="PANTHER" id="PTHR34811">
    <property type="entry name" value="MATURASE K"/>
    <property type="match status" value="1"/>
</dbReference>
<dbReference type="PANTHER" id="PTHR34811:SF1">
    <property type="entry name" value="MATURASE K"/>
    <property type="match status" value="1"/>
</dbReference>
<dbReference type="Pfam" id="PF01348">
    <property type="entry name" value="Intron_maturas2"/>
    <property type="match status" value="1"/>
</dbReference>
<dbReference type="Pfam" id="PF01824">
    <property type="entry name" value="MatK_N"/>
    <property type="match status" value="1"/>
</dbReference>
<gene>
    <name evidence="1" type="primary">matK</name>
</gene>
<evidence type="ECO:0000255" key="1">
    <source>
        <dbReference type="HAMAP-Rule" id="MF_01390"/>
    </source>
</evidence>
<protein>
    <recommendedName>
        <fullName evidence="1">Maturase K</fullName>
    </recommendedName>
    <alternativeName>
        <fullName evidence="1">Intron maturase</fullName>
    </alternativeName>
</protein>
<geneLocation type="chloroplast"/>
<name>MATK_PHLPR</name>
<accession>Q9MUZ4</accession>
<keyword id="KW-0150">Chloroplast</keyword>
<keyword id="KW-0507">mRNA processing</keyword>
<keyword id="KW-0934">Plastid</keyword>
<keyword id="KW-0694">RNA-binding</keyword>
<keyword id="KW-0819">tRNA processing</keyword>
<feature type="chain" id="PRO_0000143588" description="Maturase K">
    <location>
        <begin position="1"/>
        <end position="511"/>
    </location>
</feature>
<comment type="function">
    <text evidence="1">Usually encoded in the trnK tRNA gene intron. Probably assists in splicing its own and other chloroplast group II introns.</text>
</comment>
<comment type="subcellular location">
    <subcellularLocation>
        <location>Plastid</location>
        <location>Chloroplast</location>
    </subcellularLocation>
</comment>
<comment type="similarity">
    <text evidence="1">Belongs to the intron maturase 2 family. MatK subfamily.</text>
</comment>